<organism>
    <name type="scientific">Desulfitobacterium hafniense (strain DSM 10664 / DCB-2)</name>
    <dbReference type="NCBI Taxonomy" id="272564"/>
    <lineage>
        <taxon>Bacteria</taxon>
        <taxon>Bacillati</taxon>
        <taxon>Bacillota</taxon>
        <taxon>Clostridia</taxon>
        <taxon>Eubacteriales</taxon>
        <taxon>Desulfitobacteriaceae</taxon>
        <taxon>Desulfitobacterium</taxon>
    </lineage>
</organism>
<feature type="chain" id="PRO_1000198895" description="Arginine--tRNA ligase">
    <location>
        <begin position="1"/>
        <end position="561"/>
    </location>
</feature>
<feature type="short sequence motif" description="'HIGH' region">
    <location>
        <begin position="135"/>
        <end position="145"/>
    </location>
</feature>
<proteinExistence type="inferred from homology"/>
<accession>B8FZ89</accession>
<name>SYR_DESHD</name>
<dbReference type="EC" id="6.1.1.19" evidence="1"/>
<dbReference type="EMBL" id="CP001336">
    <property type="protein sequence ID" value="ACL22841.1"/>
    <property type="molecule type" value="Genomic_DNA"/>
</dbReference>
<dbReference type="RefSeq" id="WP_011462258.1">
    <property type="nucleotide sequence ID" value="NC_011830.1"/>
</dbReference>
<dbReference type="SMR" id="B8FZ89"/>
<dbReference type="KEGG" id="dhd:Dhaf_4846"/>
<dbReference type="HOGENOM" id="CLU_006406_0_1_9"/>
<dbReference type="Proteomes" id="UP000007726">
    <property type="component" value="Chromosome"/>
</dbReference>
<dbReference type="GO" id="GO:0005737">
    <property type="term" value="C:cytoplasm"/>
    <property type="evidence" value="ECO:0007669"/>
    <property type="project" value="UniProtKB-SubCell"/>
</dbReference>
<dbReference type="GO" id="GO:0004814">
    <property type="term" value="F:arginine-tRNA ligase activity"/>
    <property type="evidence" value="ECO:0007669"/>
    <property type="project" value="UniProtKB-UniRule"/>
</dbReference>
<dbReference type="GO" id="GO:0005524">
    <property type="term" value="F:ATP binding"/>
    <property type="evidence" value="ECO:0007669"/>
    <property type="project" value="UniProtKB-UniRule"/>
</dbReference>
<dbReference type="GO" id="GO:0006420">
    <property type="term" value="P:arginyl-tRNA aminoacylation"/>
    <property type="evidence" value="ECO:0007669"/>
    <property type="project" value="UniProtKB-UniRule"/>
</dbReference>
<dbReference type="CDD" id="cd07956">
    <property type="entry name" value="Anticodon_Ia_Arg"/>
    <property type="match status" value="1"/>
</dbReference>
<dbReference type="CDD" id="cd00671">
    <property type="entry name" value="ArgRS_core"/>
    <property type="match status" value="1"/>
</dbReference>
<dbReference type="FunFam" id="1.10.730.10:FF:000008">
    <property type="entry name" value="Arginine--tRNA ligase"/>
    <property type="match status" value="1"/>
</dbReference>
<dbReference type="FunFam" id="3.30.1360.70:FF:000003">
    <property type="entry name" value="Arginine--tRNA ligase"/>
    <property type="match status" value="1"/>
</dbReference>
<dbReference type="FunFam" id="3.40.50.620:FF:000062">
    <property type="entry name" value="Arginine--tRNA ligase"/>
    <property type="match status" value="1"/>
</dbReference>
<dbReference type="Gene3D" id="3.30.1360.70">
    <property type="entry name" value="Arginyl tRNA synthetase N-terminal domain"/>
    <property type="match status" value="1"/>
</dbReference>
<dbReference type="Gene3D" id="3.40.50.620">
    <property type="entry name" value="HUPs"/>
    <property type="match status" value="1"/>
</dbReference>
<dbReference type="Gene3D" id="1.10.730.10">
    <property type="entry name" value="Isoleucyl-tRNA Synthetase, Domain 1"/>
    <property type="match status" value="1"/>
</dbReference>
<dbReference type="HAMAP" id="MF_00123">
    <property type="entry name" value="Arg_tRNA_synth"/>
    <property type="match status" value="1"/>
</dbReference>
<dbReference type="InterPro" id="IPR001412">
    <property type="entry name" value="aa-tRNA-synth_I_CS"/>
</dbReference>
<dbReference type="InterPro" id="IPR001278">
    <property type="entry name" value="Arg-tRNA-ligase"/>
</dbReference>
<dbReference type="InterPro" id="IPR005148">
    <property type="entry name" value="Arg-tRNA-synth_N"/>
</dbReference>
<dbReference type="InterPro" id="IPR036695">
    <property type="entry name" value="Arg-tRNA-synth_N_sf"/>
</dbReference>
<dbReference type="InterPro" id="IPR035684">
    <property type="entry name" value="ArgRS_core"/>
</dbReference>
<dbReference type="InterPro" id="IPR008909">
    <property type="entry name" value="DALR_anticod-bd"/>
</dbReference>
<dbReference type="InterPro" id="IPR014729">
    <property type="entry name" value="Rossmann-like_a/b/a_fold"/>
</dbReference>
<dbReference type="InterPro" id="IPR009080">
    <property type="entry name" value="tRNAsynth_Ia_anticodon-bd"/>
</dbReference>
<dbReference type="NCBIfam" id="TIGR00456">
    <property type="entry name" value="argS"/>
    <property type="match status" value="1"/>
</dbReference>
<dbReference type="PANTHER" id="PTHR11956:SF5">
    <property type="entry name" value="ARGININE--TRNA LIGASE, CYTOPLASMIC"/>
    <property type="match status" value="1"/>
</dbReference>
<dbReference type="PANTHER" id="PTHR11956">
    <property type="entry name" value="ARGINYL-TRNA SYNTHETASE"/>
    <property type="match status" value="1"/>
</dbReference>
<dbReference type="Pfam" id="PF03485">
    <property type="entry name" value="Arg_tRNA_synt_N"/>
    <property type="match status" value="1"/>
</dbReference>
<dbReference type="Pfam" id="PF05746">
    <property type="entry name" value="DALR_1"/>
    <property type="match status" value="1"/>
</dbReference>
<dbReference type="Pfam" id="PF00750">
    <property type="entry name" value="tRNA-synt_1d"/>
    <property type="match status" value="1"/>
</dbReference>
<dbReference type="PRINTS" id="PR01038">
    <property type="entry name" value="TRNASYNTHARG"/>
</dbReference>
<dbReference type="SMART" id="SM01016">
    <property type="entry name" value="Arg_tRNA_synt_N"/>
    <property type="match status" value="1"/>
</dbReference>
<dbReference type="SMART" id="SM00836">
    <property type="entry name" value="DALR_1"/>
    <property type="match status" value="1"/>
</dbReference>
<dbReference type="SUPFAM" id="SSF47323">
    <property type="entry name" value="Anticodon-binding domain of a subclass of class I aminoacyl-tRNA synthetases"/>
    <property type="match status" value="1"/>
</dbReference>
<dbReference type="SUPFAM" id="SSF55190">
    <property type="entry name" value="Arginyl-tRNA synthetase (ArgRS), N-terminal 'additional' domain"/>
    <property type="match status" value="1"/>
</dbReference>
<dbReference type="SUPFAM" id="SSF52374">
    <property type="entry name" value="Nucleotidylyl transferase"/>
    <property type="match status" value="1"/>
</dbReference>
<dbReference type="PROSITE" id="PS00178">
    <property type="entry name" value="AA_TRNA_LIGASE_I"/>
    <property type="match status" value="1"/>
</dbReference>
<sequence length="561" mass="63140">MSLYINIKDTIYANLAKAALEAQKAGELSFESLPNYVLEEPREKQHGDWATNLAMVLTKQARKAPRDIATILIKHLDTEGTFITASEIAGPGFINFRLDPNWLTGVIPEVLNLEADYGKVNLGQGKKVQVEFVSANPTGLLHMGNARGAALGDSLAALLAMAGYEVSREFYINDAGNQIYNFALSLEARYLQLMGQDVPFPEGGYHGEDLIDTVKGLIEKVGNKYLNVDQDLRREFLVRYALEEKLTSIRETLTDMGVHYDCWFSEQSLHDSGFVKDTMEKLEQQGYIYEKEGAQWLKSTLFGDEKDEVVVRGNGTPTYFAADIAYHRNKFERGFDRVINIWGADHHGHVARMKGAMSALGYDPENLQIILMQLVRLIQNGEVVRMSKRSGQYITLRELMDEVGKDAARFFFIMRDPDSTVEFDLDLAKAESSDNPVYYVQYAHARLCSILRQAAEQGYNTAGIPQEGELKRLQSNEERELLKKIAELPNEIEVAARLTEPHRLARYVLDLAGLFHSFYNSQRVLVDEEGLREARLGLVRSTKQVLANVLGILGVTAPERM</sequence>
<comment type="catalytic activity">
    <reaction evidence="1">
        <text>tRNA(Arg) + L-arginine + ATP = L-arginyl-tRNA(Arg) + AMP + diphosphate</text>
        <dbReference type="Rhea" id="RHEA:20301"/>
        <dbReference type="Rhea" id="RHEA-COMP:9658"/>
        <dbReference type="Rhea" id="RHEA-COMP:9673"/>
        <dbReference type="ChEBI" id="CHEBI:30616"/>
        <dbReference type="ChEBI" id="CHEBI:32682"/>
        <dbReference type="ChEBI" id="CHEBI:33019"/>
        <dbReference type="ChEBI" id="CHEBI:78442"/>
        <dbReference type="ChEBI" id="CHEBI:78513"/>
        <dbReference type="ChEBI" id="CHEBI:456215"/>
        <dbReference type="EC" id="6.1.1.19"/>
    </reaction>
</comment>
<comment type="subunit">
    <text evidence="1">Monomer.</text>
</comment>
<comment type="subcellular location">
    <subcellularLocation>
        <location evidence="1">Cytoplasm</location>
    </subcellularLocation>
</comment>
<comment type="similarity">
    <text evidence="1">Belongs to the class-I aminoacyl-tRNA synthetase family.</text>
</comment>
<evidence type="ECO:0000255" key="1">
    <source>
        <dbReference type="HAMAP-Rule" id="MF_00123"/>
    </source>
</evidence>
<keyword id="KW-0030">Aminoacyl-tRNA synthetase</keyword>
<keyword id="KW-0067">ATP-binding</keyword>
<keyword id="KW-0963">Cytoplasm</keyword>
<keyword id="KW-0436">Ligase</keyword>
<keyword id="KW-0547">Nucleotide-binding</keyword>
<keyword id="KW-0648">Protein biosynthesis</keyword>
<protein>
    <recommendedName>
        <fullName evidence="1">Arginine--tRNA ligase</fullName>
        <ecNumber evidence="1">6.1.1.19</ecNumber>
    </recommendedName>
    <alternativeName>
        <fullName evidence="1">Arginyl-tRNA synthetase</fullName>
        <shortName evidence="1">ArgRS</shortName>
    </alternativeName>
</protein>
<reference key="1">
    <citation type="journal article" date="2012" name="BMC Microbiol.">
        <title>Genome sequence of Desulfitobacterium hafniense DCB-2, a Gram-positive anaerobe capable of dehalogenation and metal reduction.</title>
        <authorList>
            <person name="Kim S.H."/>
            <person name="Harzman C."/>
            <person name="Davis J.K."/>
            <person name="Hutcheson R."/>
            <person name="Broderick J.B."/>
            <person name="Marsh T.L."/>
            <person name="Tiedje J.M."/>
        </authorList>
    </citation>
    <scope>NUCLEOTIDE SEQUENCE [LARGE SCALE GENOMIC DNA]</scope>
    <source>
        <strain>DSM 10664 / DCB-2</strain>
    </source>
</reference>
<gene>
    <name evidence="1" type="primary">argS</name>
    <name type="ordered locus">Dhaf_4846</name>
</gene>